<comment type="function">
    <text evidence="1 2 4">Essential for gene silencing: has a role in the structure of silenced chromatin. Plays a role in the developing brain. Part of the small subunit (SSU) processome, first precursor of the small eukaryotic ribosomal subunit. During the assembly of the SSU processome in the nucleolus, many ribosome biogenesis factors, an RNA chaperone and ribosomal proteins associate with the nascent pre-rRNA and work in concert to generate RNA folding, modifications, rearrangements and cleavage as well as targeted degradation of pre-ribosomal RNA by the RNA exosome (By similarity).</text>
</comment>
<comment type="subunit">
    <text evidence="2">Part of the small subunit (SSU) processome, composed of more than 70 proteins and the RNA chaperone small nucleolar RNA (snoRNA) U3.</text>
</comment>
<comment type="subcellular location">
    <subcellularLocation>
        <location evidence="4">Nucleus</location>
        <location evidence="4">Nucleolus</location>
    </subcellularLocation>
</comment>
<comment type="alternative products">
    <event type="alternative splicing"/>
    <isoform>
        <id>Q9JI13-1</id>
        <name evidence="4">1</name>
        <sequence type="displayed"/>
    </isoform>
    <isoform>
        <id>Q9JI13-2</id>
        <name evidence="6">2</name>
        <sequence type="described" ref="VSP_051655 VSP_051656"/>
    </isoform>
</comment>
<comment type="tissue specificity">
    <text evidence="4">Detected mainly in subsets of neuronal cells of the brain. In the 17.5 dpc embryo, mainly expressed in the olfactory bulb and cerebral cortex. Postnatally, additionally expressed in the cerebellar cortex, most strongly in the hippocampus.</text>
</comment>
<comment type="developmental stage">
    <text evidence="4">Expressed throughout development.</text>
</comment>
<comment type="PTM">
    <text evidence="5">Citrullinated by PADI4.</text>
</comment>
<comment type="similarity">
    <text evidence="7">Belongs to the SAS10 family.</text>
</comment>
<accession>Q9JI13</accession>
<accession>Q3UL95</accession>
<accession>Q8R5C6</accession>
<accession>Q9JJ12</accession>
<feature type="chain" id="PRO_0000114327" description="Something about silencing protein 10">
    <location>
        <begin position="1"/>
        <end position="469"/>
    </location>
</feature>
<feature type="region of interest" description="Disordered" evidence="3">
    <location>
        <begin position="17"/>
        <end position="44"/>
    </location>
</feature>
<feature type="region of interest" description="Disordered" evidence="3">
    <location>
        <begin position="62"/>
        <end position="158"/>
    </location>
</feature>
<feature type="region of interest" description="Disordered" evidence="3">
    <location>
        <begin position="410"/>
        <end position="469"/>
    </location>
</feature>
<feature type="compositionally biased region" description="Acidic residues" evidence="3">
    <location>
        <begin position="68"/>
        <end position="107"/>
    </location>
</feature>
<feature type="compositionally biased region" description="Acidic residues" evidence="3">
    <location>
        <begin position="149"/>
        <end position="158"/>
    </location>
</feature>
<feature type="compositionally biased region" description="Basic residues" evidence="3">
    <location>
        <begin position="412"/>
        <end position="439"/>
    </location>
</feature>
<feature type="compositionally biased region" description="Basic and acidic residues" evidence="3">
    <location>
        <begin position="440"/>
        <end position="451"/>
    </location>
</feature>
<feature type="modified residue" description="Omega-N-methylarginine" evidence="12">
    <location>
        <position position="8"/>
    </location>
</feature>
<feature type="modified residue" description="Phosphoserine" evidence="2">
    <location>
        <position position="37"/>
    </location>
</feature>
<feature type="modified residue" description="N6-acetyllysine; alternate" evidence="11">
    <location>
        <position position="140"/>
    </location>
</feature>
<feature type="modified residue" description="Phosphoserine" evidence="2">
    <location>
        <position position="146"/>
    </location>
</feature>
<feature type="modified residue" description="Citrulline" evidence="5">
    <location>
        <position position="375"/>
    </location>
</feature>
<feature type="cross-link" description="Glycyl lysine isopeptide (Lys-Gly) (interchain with G-Cter in SUMO2); alternate" evidence="2">
    <location>
        <position position="140"/>
    </location>
</feature>
<feature type="splice variant" id="VSP_051655" description="In isoform 2." evidence="6">
    <original>T</original>
    <variation>P</variation>
    <location>
        <position position="412"/>
    </location>
</feature>
<feature type="splice variant" id="VSP_051656" description="In isoform 2." evidence="6">
    <location>
        <begin position="414"/>
        <end position="469"/>
    </location>
</feature>
<feature type="sequence conflict" description="In Ref. 1; AAF80256." evidence="7" ref="1">
    <original>A</original>
    <variation>R</variation>
    <location>
        <position position="10"/>
    </location>
</feature>
<feature type="sequence conflict" description="In Ref. 1; AAF80256." evidence="7" ref="1">
    <original>AA</original>
    <variation>RP</variation>
    <location>
        <begin position="14"/>
        <end position="15"/>
    </location>
</feature>
<proteinExistence type="evidence at protein level"/>
<reference evidence="7 8" key="1">
    <citation type="journal article" date="2001" name="Mech. Dev.">
        <title>Cloning and expression pattern of a novel PEBP2 beta-binding protein (charged amino acid rich leucine zipper-1[Crl-1]) in the mouse.</title>
        <authorList>
            <person name="Sakuma T."/>
            <person name="Li Q.-L."/>
            <person name="Jin Y."/>
            <person name="Choi L.-W."/>
            <person name="Kim E.-G."/>
            <person name="Ito K."/>
            <person name="Ito Y."/>
            <person name="Nomura S."/>
            <person name="Bae S.-C."/>
        </authorList>
    </citation>
    <scope>NUCLEOTIDE SEQUENCE [MRNA] (ISOFORM 1)</scope>
    <scope>FUNCTION</scope>
    <scope>INTERACTION WITH CBFB</scope>
    <scope>SUBCELLULAR LOCATION</scope>
    <scope>TISSUE SPECIFICITY</scope>
    <scope>DEVELOPMENTAL STAGE</scope>
    <source>
        <tissue evidence="8">Brain</tissue>
    </source>
</reference>
<reference evidence="7 9" key="2">
    <citation type="submission" date="2000-05" db="EMBL/GenBank/DDBJ databases">
        <title>Human and mouse homologs of yeast SAS10 disrupter of silencing gene.</title>
        <authorList>
            <person name="Frye R.A."/>
        </authorList>
    </citation>
    <scope>NUCLEOTIDE SEQUENCE [MRNA] (ISOFORM 1)</scope>
    <source>
        <strain evidence="9">BALB/cJ</strain>
        <tissue evidence="9">Spleen</tissue>
    </source>
</reference>
<reference key="3">
    <citation type="journal article" date="2005" name="Science">
        <title>The transcriptional landscape of the mammalian genome.</title>
        <authorList>
            <person name="Carninci P."/>
            <person name="Kasukawa T."/>
            <person name="Katayama S."/>
            <person name="Gough J."/>
            <person name="Frith M.C."/>
            <person name="Maeda N."/>
            <person name="Oyama R."/>
            <person name="Ravasi T."/>
            <person name="Lenhard B."/>
            <person name="Wells C."/>
            <person name="Kodzius R."/>
            <person name="Shimokawa K."/>
            <person name="Bajic V.B."/>
            <person name="Brenner S.E."/>
            <person name="Batalov S."/>
            <person name="Forrest A.R."/>
            <person name="Zavolan M."/>
            <person name="Davis M.J."/>
            <person name="Wilming L.G."/>
            <person name="Aidinis V."/>
            <person name="Allen J.E."/>
            <person name="Ambesi-Impiombato A."/>
            <person name="Apweiler R."/>
            <person name="Aturaliya R.N."/>
            <person name="Bailey T.L."/>
            <person name="Bansal M."/>
            <person name="Baxter L."/>
            <person name="Beisel K.W."/>
            <person name="Bersano T."/>
            <person name="Bono H."/>
            <person name="Chalk A.M."/>
            <person name="Chiu K.P."/>
            <person name="Choudhary V."/>
            <person name="Christoffels A."/>
            <person name="Clutterbuck D.R."/>
            <person name="Crowe M.L."/>
            <person name="Dalla E."/>
            <person name="Dalrymple B.P."/>
            <person name="de Bono B."/>
            <person name="Della Gatta G."/>
            <person name="di Bernardo D."/>
            <person name="Down T."/>
            <person name="Engstrom P."/>
            <person name="Fagiolini M."/>
            <person name="Faulkner G."/>
            <person name="Fletcher C.F."/>
            <person name="Fukushima T."/>
            <person name="Furuno M."/>
            <person name="Futaki S."/>
            <person name="Gariboldi M."/>
            <person name="Georgii-Hemming P."/>
            <person name="Gingeras T.R."/>
            <person name="Gojobori T."/>
            <person name="Green R.E."/>
            <person name="Gustincich S."/>
            <person name="Harbers M."/>
            <person name="Hayashi Y."/>
            <person name="Hensch T.K."/>
            <person name="Hirokawa N."/>
            <person name="Hill D."/>
            <person name="Huminiecki L."/>
            <person name="Iacono M."/>
            <person name="Ikeo K."/>
            <person name="Iwama A."/>
            <person name="Ishikawa T."/>
            <person name="Jakt M."/>
            <person name="Kanapin A."/>
            <person name="Katoh M."/>
            <person name="Kawasawa Y."/>
            <person name="Kelso J."/>
            <person name="Kitamura H."/>
            <person name="Kitano H."/>
            <person name="Kollias G."/>
            <person name="Krishnan S.P."/>
            <person name="Kruger A."/>
            <person name="Kummerfeld S.K."/>
            <person name="Kurochkin I.V."/>
            <person name="Lareau L.F."/>
            <person name="Lazarevic D."/>
            <person name="Lipovich L."/>
            <person name="Liu J."/>
            <person name="Liuni S."/>
            <person name="McWilliam S."/>
            <person name="Madan Babu M."/>
            <person name="Madera M."/>
            <person name="Marchionni L."/>
            <person name="Matsuda H."/>
            <person name="Matsuzawa S."/>
            <person name="Miki H."/>
            <person name="Mignone F."/>
            <person name="Miyake S."/>
            <person name="Morris K."/>
            <person name="Mottagui-Tabar S."/>
            <person name="Mulder N."/>
            <person name="Nakano N."/>
            <person name="Nakauchi H."/>
            <person name="Ng P."/>
            <person name="Nilsson R."/>
            <person name="Nishiguchi S."/>
            <person name="Nishikawa S."/>
            <person name="Nori F."/>
            <person name="Ohara O."/>
            <person name="Okazaki Y."/>
            <person name="Orlando V."/>
            <person name="Pang K.C."/>
            <person name="Pavan W.J."/>
            <person name="Pavesi G."/>
            <person name="Pesole G."/>
            <person name="Petrovsky N."/>
            <person name="Piazza S."/>
            <person name="Reed J."/>
            <person name="Reid J.F."/>
            <person name="Ring B.Z."/>
            <person name="Ringwald M."/>
            <person name="Rost B."/>
            <person name="Ruan Y."/>
            <person name="Salzberg S.L."/>
            <person name="Sandelin A."/>
            <person name="Schneider C."/>
            <person name="Schoenbach C."/>
            <person name="Sekiguchi K."/>
            <person name="Semple C.A."/>
            <person name="Seno S."/>
            <person name="Sessa L."/>
            <person name="Sheng Y."/>
            <person name="Shibata Y."/>
            <person name="Shimada H."/>
            <person name="Shimada K."/>
            <person name="Silva D."/>
            <person name="Sinclair B."/>
            <person name="Sperling S."/>
            <person name="Stupka E."/>
            <person name="Sugiura K."/>
            <person name="Sultana R."/>
            <person name="Takenaka Y."/>
            <person name="Taki K."/>
            <person name="Tammoja K."/>
            <person name="Tan S.L."/>
            <person name="Tang S."/>
            <person name="Taylor M.S."/>
            <person name="Tegner J."/>
            <person name="Teichmann S.A."/>
            <person name="Ueda H.R."/>
            <person name="van Nimwegen E."/>
            <person name="Verardo R."/>
            <person name="Wei C.L."/>
            <person name="Yagi K."/>
            <person name="Yamanishi H."/>
            <person name="Zabarovsky E."/>
            <person name="Zhu S."/>
            <person name="Zimmer A."/>
            <person name="Hide W."/>
            <person name="Bult C."/>
            <person name="Grimmond S.M."/>
            <person name="Teasdale R.D."/>
            <person name="Liu E.T."/>
            <person name="Brusic V."/>
            <person name="Quackenbush J."/>
            <person name="Wahlestedt C."/>
            <person name="Mattick J.S."/>
            <person name="Hume D.A."/>
            <person name="Kai C."/>
            <person name="Sasaki D."/>
            <person name="Tomaru Y."/>
            <person name="Fukuda S."/>
            <person name="Kanamori-Katayama M."/>
            <person name="Suzuki M."/>
            <person name="Aoki J."/>
            <person name="Arakawa T."/>
            <person name="Iida J."/>
            <person name="Imamura K."/>
            <person name="Itoh M."/>
            <person name="Kato T."/>
            <person name="Kawaji H."/>
            <person name="Kawagashira N."/>
            <person name="Kawashima T."/>
            <person name="Kojima M."/>
            <person name="Kondo S."/>
            <person name="Konno H."/>
            <person name="Nakano K."/>
            <person name="Ninomiya N."/>
            <person name="Nishio T."/>
            <person name="Okada M."/>
            <person name="Plessy C."/>
            <person name="Shibata K."/>
            <person name="Shiraki T."/>
            <person name="Suzuki S."/>
            <person name="Tagami M."/>
            <person name="Waki K."/>
            <person name="Watahiki A."/>
            <person name="Okamura-Oho Y."/>
            <person name="Suzuki H."/>
            <person name="Kawai J."/>
            <person name="Hayashizaki Y."/>
        </authorList>
    </citation>
    <scope>NUCLEOTIDE SEQUENCE [LARGE SCALE MRNA] (ISOFORM 1)</scope>
    <source>
        <strain>C57BL/6J</strain>
    </source>
</reference>
<reference evidence="7 10" key="4">
    <citation type="journal article" date="2004" name="Genome Res.">
        <title>The status, quality, and expansion of the NIH full-length cDNA project: the Mammalian Gene Collection (MGC).</title>
        <authorList>
            <consortium name="The MGC Project Team"/>
        </authorList>
    </citation>
    <scope>NUCLEOTIDE SEQUENCE [LARGE SCALE MRNA] (ISOFORM 2)</scope>
    <source>
        <strain evidence="10">FVB/N-3</strain>
        <tissue evidence="10">Mammary gland</tissue>
    </source>
</reference>
<reference key="5">
    <citation type="journal article" date="2013" name="Mol. Cell">
        <title>SIRT5-mediated lysine desuccinylation impacts diverse metabolic pathways.</title>
        <authorList>
            <person name="Park J."/>
            <person name="Chen Y."/>
            <person name="Tishkoff D.X."/>
            <person name="Peng C."/>
            <person name="Tan M."/>
            <person name="Dai L."/>
            <person name="Xie Z."/>
            <person name="Zhang Y."/>
            <person name="Zwaans B.M."/>
            <person name="Skinner M.E."/>
            <person name="Lombard D.B."/>
            <person name="Zhao Y."/>
        </authorList>
    </citation>
    <scope>ACETYLATION [LARGE SCALE ANALYSIS] AT LYS-140</scope>
    <scope>IDENTIFICATION BY MASS SPECTROMETRY [LARGE SCALE ANALYSIS]</scope>
    <source>
        <tissue>Embryonic fibroblast</tissue>
    </source>
</reference>
<reference key="6">
    <citation type="journal article" date="2014" name="Mol. Cell. Proteomics">
        <title>Immunoaffinity enrichment and mass spectrometry analysis of protein methylation.</title>
        <authorList>
            <person name="Guo A."/>
            <person name="Gu H."/>
            <person name="Zhou J."/>
            <person name="Mulhern D."/>
            <person name="Wang Y."/>
            <person name="Lee K.A."/>
            <person name="Yang V."/>
            <person name="Aguiar M."/>
            <person name="Kornhauser J."/>
            <person name="Jia X."/>
            <person name="Ren J."/>
            <person name="Beausoleil S.A."/>
            <person name="Silva J.C."/>
            <person name="Vemulapalli V."/>
            <person name="Bedford M.T."/>
            <person name="Comb M.J."/>
        </authorList>
    </citation>
    <scope>METHYLATION [LARGE SCALE ANALYSIS] AT ARG-8</scope>
    <scope>IDENTIFICATION BY MASS SPECTROMETRY [LARGE SCALE ANALYSIS]</scope>
    <source>
        <tissue>Embryo</tissue>
    </source>
</reference>
<reference key="7">
    <citation type="journal article" date="2014" name="Nature">
        <title>Citrullination regulates pluripotency and histone H1 binding to chromatin.</title>
        <authorList>
            <person name="Christophorou M.A."/>
            <person name="Castelo-Branco G."/>
            <person name="Halley-Stott R.P."/>
            <person name="Oliveira C.S."/>
            <person name="Loos R."/>
            <person name="Radzisheuskaya A."/>
            <person name="Mowen K.A."/>
            <person name="Bertone P."/>
            <person name="Silva J.C."/>
            <person name="Zernicka-Goetz M."/>
            <person name="Nielsen M.L."/>
            <person name="Gurdon J.B."/>
            <person name="Kouzarides T."/>
        </authorList>
    </citation>
    <scope>CITRULLINATION AT ARG-375</scope>
</reference>
<organism>
    <name type="scientific">Mus musculus</name>
    <name type="common">Mouse</name>
    <dbReference type="NCBI Taxonomy" id="10090"/>
    <lineage>
        <taxon>Eukaryota</taxon>
        <taxon>Metazoa</taxon>
        <taxon>Chordata</taxon>
        <taxon>Craniata</taxon>
        <taxon>Vertebrata</taxon>
        <taxon>Euteleostomi</taxon>
        <taxon>Mammalia</taxon>
        <taxon>Eutheria</taxon>
        <taxon>Euarchontoglires</taxon>
        <taxon>Glires</taxon>
        <taxon>Rodentia</taxon>
        <taxon>Myomorpha</taxon>
        <taxon>Muroidea</taxon>
        <taxon>Muridae</taxon>
        <taxon>Murinae</taxon>
        <taxon>Mus</taxon>
        <taxon>Mus</taxon>
    </lineage>
</organism>
<sequence length="469" mass="53399">MVKKSRRRGAAQWAAVRAQAGLTATDENEDDLGLPPSPGDSSYYQDQVDEFHEARSRAVLAKGWNEVESGEEDGDEEEEVLPLDIDDGDDEDGESSEEEEVGEDDDGGSSVQSEAEASVDPSLSWGQRKKLYYDTDYGSKSRGRQSQQEVEEEEREEEEEAQIIQRRLAQALQEDDFGVAWVEAFAKPVPQVDEAETRVVKDLAKVSVKEKLKMLKKESPELLELIEDLQAKLTEVKDELEPLLQLVEKGVIPTGRGSEYLKTKYNLYLNYCANISFYLILKARRVPAHGHPVIERLVTYRNLINKLSVVDQKLSSEIRHLLTAKDGAVKKEMTPKAKLTKTKPKSVKQAAAVALTDEPDFDGAALKYYKEMEDRQELKRKKEENSAEEQALEEQNAKRAITYQIAKNRGLTPRRKKIDRNPRVKHREKFRKAKIRRRGQVREVRREEQRYSGELSGIRAGVKKSIKLK</sequence>
<dbReference type="EMBL" id="AF155362">
    <property type="protein sequence ID" value="AAF80256.2"/>
    <property type="molecule type" value="mRNA"/>
</dbReference>
<dbReference type="EMBL" id="AF271213">
    <property type="protein sequence ID" value="AAF91409.1"/>
    <property type="molecule type" value="mRNA"/>
</dbReference>
<dbReference type="EMBL" id="AK010316">
    <property type="protein sequence ID" value="BAB26848.1"/>
    <property type="molecule type" value="mRNA"/>
</dbReference>
<dbReference type="EMBL" id="AK145637">
    <property type="protein sequence ID" value="BAE26555.1"/>
    <property type="molecule type" value="mRNA"/>
</dbReference>
<dbReference type="EMBL" id="BC022994">
    <property type="protein sequence ID" value="AAH22994.1"/>
    <property type="molecule type" value="mRNA"/>
</dbReference>
<dbReference type="CCDS" id="CCDS19402.1">
    <molecule id="Q9JI13-1"/>
</dbReference>
<dbReference type="RefSeq" id="NP_075541.1">
    <molecule id="Q9JI13-1"/>
    <property type="nucleotide sequence ID" value="NM_023054.2"/>
</dbReference>
<dbReference type="SMR" id="Q9JI13"/>
<dbReference type="BioGRID" id="211158">
    <property type="interactions" value="10"/>
</dbReference>
<dbReference type="FunCoup" id="Q9JI13">
    <property type="interactions" value="3471"/>
</dbReference>
<dbReference type="IntAct" id="Q9JI13">
    <property type="interactions" value="2"/>
</dbReference>
<dbReference type="STRING" id="10090.ENSMUSP00000087896"/>
<dbReference type="iPTMnet" id="Q9JI13"/>
<dbReference type="PhosphoSitePlus" id="Q9JI13"/>
<dbReference type="PaxDb" id="10090-ENSMUSP00000087896"/>
<dbReference type="PeptideAtlas" id="Q9JI13"/>
<dbReference type="ProteomicsDB" id="256918">
    <molecule id="Q9JI13-1"/>
</dbReference>
<dbReference type="ProteomicsDB" id="256919">
    <molecule id="Q9JI13-2"/>
</dbReference>
<dbReference type="Pumba" id="Q9JI13"/>
<dbReference type="Antibodypedia" id="24355">
    <property type="antibodies" value="131 antibodies from 23 providers"/>
</dbReference>
<dbReference type="DNASU" id="65961"/>
<dbReference type="Ensembl" id="ENSMUST00000090413.6">
    <molecule id="Q9JI13-1"/>
    <property type="protein sequence ID" value="ENSMUSP00000087896.5"/>
    <property type="gene ID" value="ENSMUSG00000070697.5"/>
</dbReference>
<dbReference type="GeneID" id="65961"/>
<dbReference type="KEGG" id="mmu:65961"/>
<dbReference type="UCSC" id="uc008xzv.1">
    <molecule id="Q9JI13-1"/>
    <property type="organism name" value="mouse"/>
</dbReference>
<dbReference type="AGR" id="MGI:1919230"/>
<dbReference type="CTD" id="57050"/>
<dbReference type="MGI" id="MGI:1919230">
    <property type="gene designation" value="Utp3"/>
</dbReference>
<dbReference type="VEuPathDB" id="HostDB:ENSMUSG00000070697"/>
<dbReference type="eggNOG" id="KOG3118">
    <property type="taxonomic scope" value="Eukaryota"/>
</dbReference>
<dbReference type="GeneTree" id="ENSGT00500000044947"/>
<dbReference type="HOGENOM" id="CLU_025161_1_0_1"/>
<dbReference type="InParanoid" id="Q9JI13"/>
<dbReference type="OMA" id="EEYIRPQ"/>
<dbReference type="OrthoDB" id="1924577at2759"/>
<dbReference type="PhylomeDB" id="Q9JI13"/>
<dbReference type="TreeFam" id="TF315177"/>
<dbReference type="Reactome" id="R-MMU-6791226">
    <property type="pathway name" value="Major pathway of rRNA processing in the nucleolus and cytosol"/>
</dbReference>
<dbReference type="BioGRID-ORCS" id="65961">
    <property type="hits" value="19 hits in 59 CRISPR screens"/>
</dbReference>
<dbReference type="ChiTaRS" id="Il27ra">
    <property type="organism name" value="mouse"/>
</dbReference>
<dbReference type="PRO" id="PR:Q9JI13"/>
<dbReference type="Proteomes" id="UP000000589">
    <property type="component" value="Chromosome 5"/>
</dbReference>
<dbReference type="RNAct" id="Q9JI13">
    <property type="molecule type" value="protein"/>
</dbReference>
<dbReference type="Bgee" id="ENSMUSG00000070697">
    <property type="expression patterns" value="Expressed in embryonic post-anal tail and 274 other cell types or tissues"/>
</dbReference>
<dbReference type="GO" id="GO:0005730">
    <property type="term" value="C:nucleolus"/>
    <property type="evidence" value="ECO:0007669"/>
    <property type="project" value="UniProtKB-SubCell"/>
</dbReference>
<dbReference type="GO" id="GO:0005634">
    <property type="term" value="C:nucleus"/>
    <property type="evidence" value="ECO:0000353"/>
    <property type="project" value="MGI"/>
</dbReference>
<dbReference type="GO" id="GO:0032040">
    <property type="term" value="C:small-subunit processome"/>
    <property type="evidence" value="ECO:0000250"/>
    <property type="project" value="UniProtKB"/>
</dbReference>
<dbReference type="GO" id="GO:0007420">
    <property type="term" value="P:brain development"/>
    <property type="evidence" value="ECO:0000314"/>
    <property type="project" value="UniProtKB"/>
</dbReference>
<dbReference type="GO" id="GO:0006325">
    <property type="term" value="P:chromatin organization"/>
    <property type="evidence" value="ECO:0007669"/>
    <property type="project" value="UniProtKB-KW"/>
</dbReference>
<dbReference type="GO" id="GO:0042274">
    <property type="term" value="P:ribosomal small subunit biogenesis"/>
    <property type="evidence" value="ECO:0000250"/>
    <property type="project" value="UniProtKB"/>
</dbReference>
<dbReference type="InterPro" id="IPR007146">
    <property type="entry name" value="Sas10/Utp3/C1D"/>
</dbReference>
<dbReference type="InterPro" id="IPR018972">
    <property type="entry name" value="Sas10_C_dom"/>
</dbReference>
<dbReference type="PANTHER" id="PTHR13237:SF8">
    <property type="entry name" value="SOMETHING ABOUT SILENCING PROTEIN 10"/>
    <property type="match status" value="1"/>
</dbReference>
<dbReference type="PANTHER" id="PTHR13237">
    <property type="entry name" value="SOMETHING ABOUT SILENCING PROTEIN 10-RELATED"/>
    <property type="match status" value="1"/>
</dbReference>
<dbReference type="Pfam" id="PF09368">
    <property type="entry name" value="Sas10"/>
    <property type="match status" value="1"/>
</dbReference>
<dbReference type="Pfam" id="PF04000">
    <property type="entry name" value="Sas10_Utp3"/>
    <property type="match status" value="1"/>
</dbReference>
<evidence type="ECO:0000250" key="1">
    <source>
        <dbReference type="UniProtKB" id="Q12136"/>
    </source>
</evidence>
<evidence type="ECO:0000250" key="2">
    <source>
        <dbReference type="UniProtKB" id="Q9NQZ2"/>
    </source>
</evidence>
<evidence type="ECO:0000256" key="3">
    <source>
        <dbReference type="SAM" id="MobiDB-lite"/>
    </source>
</evidence>
<evidence type="ECO:0000269" key="4">
    <source>
    </source>
</evidence>
<evidence type="ECO:0000269" key="5">
    <source>
    </source>
</evidence>
<evidence type="ECO:0000303" key="6">
    <source>
    </source>
</evidence>
<evidence type="ECO:0000305" key="7"/>
<evidence type="ECO:0000312" key="8">
    <source>
        <dbReference type="EMBL" id="AAF80256.2"/>
    </source>
</evidence>
<evidence type="ECO:0000312" key="9">
    <source>
        <dbReference type="EMBL" id="AAF91409.1"/>
    </source>
</evidence>
<evidence type="ECO:0000312" key="10">
    <source>
        <dbReference type="EMBL" id="AAH22994.1"/>
    </source>
</evidence>
<evidence type="ECO:0007744" key="11">
    <source>
    </source>
</evidence>
<evidence type="ECO:0007744" key="12">
    <source>
    </source>
</evidence>
<protein>
    <recommendedName>
        <fullName>Something about silencing protein 10</fullName>
    </recommendedName>
    <alternativeName>
        <fullName>Charged amino acid-rich leucine zipper 1</fullName>
        <shortName>Crl-1</shortName>
    </alternativeName>
    <alternativeName>
        <fullName>Disrupter of silencing SAS10</fullName>
    </alternativeName>
    <alternativeName>
        <fullName>UTP3 homolog</fullName>
    </alternativeName>
</protein>
<keyword id="KW-0007">Acetylation</keyword>
<keyword id="KW-0025">Alternative splicing</keyword>
<keyword id="KW-0156">Chromatin regulator</keyword>
<keyword id="KW-0164">Citrullination</keyword>
<keyword id="KW-0217">Developmental protein</keyword>
<keyword id="KW-1017">Isopeptide bond</keyword>
<keyword id="KW-0488">Methylation</keyword>
<keyword id="KW-0539">Nucleus</keyword>
<keyword id="KW-0597">Phosphoprotein</keyword>
<keyword id="KW-1185">Reference proteome</keyword>
<keyword id="KW-0832">Ubl conjugation</keyword>
<name>SAS10_MOUSE</name>
<gene>
    <name type="primary">Utp3</name>
    <name type="synonym">Crl1</name>
    <name type="synonym">Crlz1</name>
    <name evidence="9" type="synonym">Sas10</name>
</gene>